<keyword id="KW-0067">ATP-binding</keyword>
<keyword id="KW-0418">Kinase</keyword>
<keyword id="KW-0441">Lipid A biosynthesis</keyword>
<keyword id="KW-0444">Lipid biosynthesis</keyword>
<keyword id="KW-0443">Lipid metabolism</keyword>
<keyword id="KW-0547">Nucleotide-binding</keyword>
<keyword id="KW-0808">Transferase</keyword>
<accession>B1LJU8</accession>
<organism>
    <name type="scientific">Escherichia coli (strain SMS-3-5 / SECEC)</name>
    <dbReference type="NCBI Taxonomy" id="439855"/>
    <lineage>
        <taxon>Bacteria</taxon>
        <taxon>Pseudomonadati</taxon>
        <taxon>Pseudomonadota</taxon>
        <taxon>Gammaproteobacteria</taxon>
        <taxon>Enterobacterales</taxon>
        <taxon>Enterobacteriaceae</taxon>
        <taxon>Escherichia</taxon>
    </lineage>
</organism>
<evidence type="ECO:0000255" key="1">
    <source>
        <dbReference type="HAMAP-Rule" id="MF_00409"/>
    </source>
</evidence>
<name>LPXK_ECOSM</name>
<dbReference type="EC" id="2.7.1.130" evidence="1"/>
<dbReference type="EMBL" id="CP000970">
    <property type="protein sequence ID" value="ACB19133.1"/>
    <property type="molecule type" value="Genomic_DNA"/>
</dbReference>
<dbReference type="RefSeq" id="WP_000570523.1">
    <property type="nucleotide sequence ID" value="NC_010498.1"/>
</dbReference>
<dbReference type="SMR" id="B1LJU8"/>
<dbReference type="KEGG" id="ecm:EcSMS35_2205"/>
<dbReference type="HOGENOM" id="CLU_038816_2_0_6"/>
<dbReference type="UniPathway" id="UPA00359">
    <property type="reaction ID" value="UER00482"/>
</dbReference>
<dbReference type="Proteomes" id="UP000007011">
    <property type="component" value="Chromosome"/>
</dbReference>
<dbReference type="GO" id="GO:0005886">
    <property type="term" value="C:plasma membrane"/>
    <property type="evidence" value="ECO:0007669"/>
    <property type="project" value="TreeGrafter"/>
</dbReference>
<dbReference type="GO" id="GO:0005524">
    <property type="term" value="F:ATP binding"/>
    <property type="evidence" value="ECO:0007669"/>
    <property type="project" value="UniProtKB-UniRule"/>
</dbReference>
<dbReference type="GO" id="GO:0009029">
    <property type="term" value="F:tetraacyldisaccharide 4'-kinase activity"/>
    <property type="evidence" value="ECO:0007669"/>
    <property type="project" value="UniProtKB-UniRule"/>
</dbReference>
<dbReference type="GO" id="GO:0009245">
    <property type="term" value="P:lipid A biosynthetic process"/>
    <property type="evidence" value="ECO:0007669"/>
    <property type="project" value="UniProtKB-UniRule"/>
</dbReference>
<dbReference type="GO" id="GO:0009244">
    <property type="term" value="P:lipopolysaccharide core region biosynthetic process"/>
    <property type="evidence" value="ECO:0007669"/>
    <property type="project" value="TreeGrafter"/>
</dbReference>
<dbReference type="HAMAP" id="MF_00409">
    <property type="entry name" value="LpxK"/>
    <property type="match status" value="1"/>
</dbReference>
<dbReference type="InterPro" id="IPR003758">
    <property type="entry name" value="LpxK"/>
</dbReference>
<dbReference type="InterPro" id="IPR027417">
    <property type="entry name" value="P-loop_NTPase"/>
</dbReference>
<dbReference type="NCBIfam" id="TIGR00682">
    <property type="entry name" value="lpxK"/>
    <property type="match status" value="1"/>
</dbReference>
<dbReference type="PANTHER" id="PTHR42724">
    <property type="entry name" value="TETRAACYLDISACCHARIDE 4'-KINASE"/>
    <property type="match status" value="1"/>
</dbReference>
<dbReference type="PANTHER" id="PTHR42724:SF1">
    <property type="entry name" value="TETRAACYLDISACCHARIDE 4'-KINASE, MITOCHONDRIAL-RELATED"/>
    <property type="match status" value="1"/>
</dbReference>
<dbReference type="Pfam" id="PF02606">
    <property type="entry name" value="LpxK"/>
    <property type="match status" value="1"/>
</dbReference>
<dbReference type="SUPFAM" id="SSF52540">
    <property type="entry name" value="P-loop containing nucleoside triphosphate hydrolases"/>
    <property type="match status" value="1"/>
</dbReference>
<protein>
    <recommendedName>
        <fullName evidence="1">Tetraacyldisaccharide 4'-kinase</fullName>
        <ecNumber evidence="1">2.7.1.130</ecNumber>
    </recommendedName>
    <alternativeName>
        <fullName evidence="1">Lipid A 4'-kinase</fullName>
    </alternativeName>
</protein>
<sequence>MIEKIWSGESPLWRLLLPLSWLYGLVSGAIRLCYKLKLKRAWRAPVPVVVVGNLTAGGNGKTPVVVWLVEQLQQRGICVGVVSRGYGGKAESYPLLLSADTTTAQAGDEPVLIYQRTDAPVAVSPVRSDAIKAILAQHPDVQIIVTDDGLQHYRLARDVEIVVIDGVRRFGNGWWLPAGPMRERAGRLKSVDAVIVNGGVPRSGEIPMHLLPGQAVNLRTGTRCDVAQLEHVVAMAGIGHPPRFFATLKMCGVQPEKCVPLADHQSLNHADVSALVSAGQTLVMTEKDAVKCRAFAEENWWYLPVDAQLSGDEPAKLLAQLTSLASGN</sequence>
<comment type="function">
    <text evidence="1">Transfers the gamma-phosphate of ATP to the 4'-position of a tetraacyldisaccharide 1-phosphate intermediate (termed DS-1-P) to form tetraacyldisaccharide 1,4'-bis-phosphate (lipid IVA).</text>
</comment>
<comment type="catalytic activity">
    <reaction evidence="1">
        <text>a lipid A disaccharide + ATP = a lipid IVA + ADP + H(+)</text>
        <dbReference type="Rhea" id="RHEA:67840"/>
        <dbReference type="ChEBI" id="CHEBI:15378"/>
        <dbReference type="ChEBI" id="CHEBI:30616"/>
        <dbReference type="ChEBI" id="CHEBI:176343"/>
        <dbReference type="ChEBI" id="CHEBI:176425"/>
        <dbReference type="ChEBI" id="CHEBI:456216"/>
        <dbReference type="EC" id="2.7.1.130"/>
    </reaction>
</comment>
<comment type="pathway">
    <text evidence="1">Glycolipid biosynthesis; lipid IV(A) biosynthesis; lipid IV(A) from (3R)-3-hydroxytetradecanoyl-[acyl-carrier-protein] and UDP-N-acetyl-alpha-D-glucosamine: step 6/6.</text>
</comment>
<comment type="similarity">
    <text evidence="1">Belongs to the LpxK family.</text>
</comment>
<feature type="chain" id="PRO_1000123713" description="Tetraacyldisaccharide 4'-kinase">
    <location>
        <begin position="1"/>
        <end position="328"/>
    </location>
</feature>
<feature type="binding site" evidence="1">
    <location>
        <begin position="55"/>
        <end position="62"/>
    </location>
    <ligand>
        <name>ATP</name>
        <dbReference type="ChEBI" id="CHEBI:30616"/>
    </ligand>
</feature>
<reference key="1">
    <citation type="journal article" date="2008" name="J. Bacteriol.">
        <title>Insights into the environmental resistance gene pool from the genome sequence of the multidrug-resistant environmental isolate Escherichia coli SMS-3-5.</title>
        <authorList>
            <person name="Fricke W.F."/>
            <person name="Wright M.S."/>
            <person name="Lindell A.H."/>
            <person name="Harkins D.M."/>
            <person name="Baker-Austin C."/>
            <person name="Ravel J."/>
            <person name="Stepanauskas R."/>
        </authorList>
    </citation>
    <scope>NUCLEOTIDE SEQUENCE [LARGE SCALE GENOMIC DNA]</scope>
    <source>
        <strain>SMS-3-5 / SECEC</strain>
    </source>
</reference>
<gene>
    <name evidence="1" type="primary">lpxK</name>
    <name type="ordered locus">EcSMS35_2205</name>
</gene>
<proteinExistence type="inferred from homology"/>